<protein>
    <recommendedName>
        <fullName evidence="1">Nucleoside triphosphate pyrophosphatase</fullName>
        <ecNumber evidence="1">3.6.1.9</ecNumber>
    </recommendedName>
    <alternativeName>
        <fullName evidence="1">Nucleotide pyrophosphatase</fullName>
        <shortName evidence="1">Nucleotide PPase</shortName>
    </alternativeName>
</protein>
<reference key="1">
    <citation type="journal article" date="2007" name="Genome Res.">
        <title>Reductive evolution and niche adaptation inferred from the genome of Mycobacterium ulcerans, the causative agent of Buruli ulcer.</title>
        <authorList>
            <person name="Stinear T.P."/>
            <person name="Seemann T."/>
            <person name="Pidot S."/>
            <person name="Frigui W."/>
            <person name="Reysset G."/>
            <person name="Garnier T."/>
            <person name="Meurice G."/>
            <person name="Simon D."/>
            <person name="Bouchier C."/>
            <person name="Ma L."/>
            <person name="Tichit M."/>
            <person name="Porter J.L."/>
            <person name="Ryan J."/>
            <person name="Johnson P.D.R."/>
            <person name="Davies J.K."/>
            <person name="Jenkin G.A."/>
            <person name="Small P.L.C."/>
            <person name="Jones L.M."/>
            <person name="Tekaia F."/>
            <person name="Laval F."/>
            <person name="Daffe M."/>
            <person name="Parkhill J."/>
            <person name="Cole S.T."/>
        </authorList>
    </citation>
    <scope>NUCLEOTIDE SEQUENCE [LARGE SCALE GENOMIC DNA]</scope>
    <source>
        <strain>Agy99</strain>
    </source>
</reference>
<sequence>MTRLVLGSASSGRLKVLQQAGVDPLVVVSGVDEDAIMAGLGPAATPADVVRVLARAKAEQVATTLTGQQASVAADCLVIGCDSMLYIDGRLCGKPETVDDARQLWRSMAGRCGHLYTGHSVVRLTEQRVTHRDDETSTTTVHFAAPSDDDLEAYLATGESLKVAGGFTLDGLGGWFITGVEGDPSAVVGIGLPLTRDLISRAGISIAALWASNPLP</sequence>
<accession>A0PRJ3</accession>
<comment type="function">
    <text evidence="1">Nucleoside triphosphate pyrophosphatase. May have a dual role in cell division arrest and in preventing the incorporation of modified nucleotides into cellular nucleic acids.</text>
</comment>
<comment type="catalytic activity">
    <reaction evidence="1">
        <text>a ribonucleoside 5'-triphosphate + H2O = a ribonucleoside 5'-phosphate + diphosphate + H(+)</text>
        <dbReference type="Rhea" id="RHEA:23996"/>
        <dbReference type="ChEBI" id="CHEBI:15377"/>
        <dbReference type="ChEBI" id="CHEBI:15378"/>
        <dbReference type="ChEBI" id="CHEBI:33019"/>
        <dbReference type="ChEBI" id="CHEBI:58043"/>
        <dbReference type="ChEBI" id="CHEBI:61557"/>
        <dbReference type="EC" id="3.6.1.9"/>
    </reaction>
</comment>
<comment type="catalytic activity">
    <reaction evidence="1">
        <text>a 2'-deoxyribonucleoside 5'-triphosphate + H2O = a 2'-deoxyribonucleoside 5'-phosphate + diphosphate + H(+)</text>
        <dbReference type="Rhea" id="RHEA:44644"/>
        <dbReference type="ChEBI" id="CHEBI:15377"/>
        <dbReference type="ChEBI" id="CHEBI:15378"/>
        <dbReference type="ChEBI" id="CHEBI:33019"/>
        <dbReference type="ChEBI" id="CHEBI:61560"/>
        <dbReference type="ChEBI" id="CHEBI:65317"/>
        <dbReference type="EC" id="3.6.1.9"/>
    </reaction>
</comment>
<comment type="cofactor">
    <cofactor evidence="1">
        <name>a divalent metal cation</name>
        <dbReference type="ChEBI" id="CHEBI:60240"/>
    </cofactor>
</comment>
<comment type="subcellular location">
    <subcellularLocation>
        <location evidence="1">Cytoplasm</location>
    </subcellularLocation>
</comment>
<comment type="similarity">
    <text evidence="1">Belongs to the Maf family.</text>
</comment>
<keyword id="KW-0963">Cytoplasm</keyword>
<keyword id="KW-0378">Hydrolase</keyword>
<keyword id="KW-0546">Nucleotide metabolism</keyword>
<evidence type="ECO:0000255" key="1">
    <source>
        <dbReference type="HAMAP-Rule" id="MF_00528"/>
    </source>
</evidence>
<gene>
    <name type="ordered locus">MUL_2634</name>
</gene>
<organism>
    <name type="scientific">Mycobacterium ulcerans (strain Agy99)</name>
    <dbReference type="NCBI Taxonomy" id="362242"/>
    <lineage>
        <taxon>Bacteria</taxon>
        <taxon>Bacillati</taxon>
        <taxon>Actinomycetota</taxon>
        <taxon>Actinomycetes</taxon>
        <taxon>Mycobacteriales</taxon>
        <taxon>Mycobacteriaceae</taxon>
        <taxon>Mycobacterium</taxon>
        <taxon>Mycobacterium ulcerans group</taxon>
    </lineage>
</organism>
<dbReference type="EC" id="3.6.1.9" evidence="1"/>
<dbReference type="EMBL" id="CP000325">
    <property type="protein sequence ID" value="ABL04962.1"/>
    <property type="molecule type" value="Genomic_DNA"/>
</dbReference>
<dbReference type="RefSeq" id="WP_011740577.1">
    <property type="nucleotide sequence ID" value="NC_008611.1"/>
</dbReference>
<dbReference type="SMR" id="A0PRJ3"/>
<dbReference type="KEGG" id="mul:MUL_2634"/>
<dbReference type="eggNOG" id="COG0424">
    <property type="taxonomic scope" value="Bacteria"/>
</dbReference>
<dbReference type="HOGENOM" id="CLU_040416_1_2_11"/>
<dbReference type="Proteomes" id="UP000000765">
    <property type="component" value="Chromosome"/>
</dbReference>
<dbReference type="GO" id="GO:0005737">
    <property type="term" value="C:cytoplasm"/>
    <property type="evidence" value="ECO:0007669"/>
    <property type="project" value="UniProtKB-SubCell"/>
</dbReference>
<dbReference type="GO" id="GO:0047429">
    <property type="term" value="F:nucleoside triphosphate diphosphatase activity"/>
    <property type="evidence" value="ECO:0007669"/>
    <property type="project" value="UniProtKB-EC"/>
</dbReference>
<dbReference type="GO" id="GO:0009117">
    <property type="term" value="P:nucleotide metabolic process"/>
    <property type="evidence" value="ECO:0007669"/>
    <property type="project" value="UniProtKB-KW"/>
</dbReference>
<dbReference type="CDD" id="cd00555">
    <property type="entry name" value="Maf"/>
    <property type="match status" value="1"/>
</dbReference>
<dbReference type="Gene3D" id="3.90.950.10">
    <property type="match status" value="1"/>
</dbReference>
<dbReference type="HAMAP" id="MF_00528">
    <property type="entry name" value="Maf"/>
    <property type="match status" value="1"/>
</dbReference>
<dbReference type="InterPro" id="IPR029001">
    <property type="entry name" value="ITPase-like_fam"/>
</dbReference>
<dbReference type="InterPro" id="IPR003697">
    <property type="entry name" value="Maf-like"/>
</dbReference>
<dbReference type="NCBIfam" id="TIGR00172">
    <property type="entry name" value="maf"/>
    <property type="match status" value="1"/>
</dbReference>
<dbReference type="PANTHER" id="PTHR43213">
    <property type="entry name" value="BIFUNCTIONAL DTTP/UTP PYROPHOSPHATASE/METHYLTRANSFERASE PROTEIN-RELATED"/>
    <property type="match status" value="1"/>
</dbReference>
<dbReference type="PANTHER" id="PTHR43213:SF5">
    <property type="entry name" value="BIFUNCTIONAL DTTP_UTP PYROPHOSPHATASE_METHYLTRANSFERASE PROTEIN-RELATED"/>
    <property type="match status" value="1"/>
</dbReference>
<dbReference type="Pfam" id="PF02545">
    <property type="entry name" value="Maf"/>
    <property type="match status" value="1"/>
</dbReference>
<dbReference type="PIRSF" id="PIRSF006305">
    <property type="entry name" value="Maf"/>
    <property type="match status" value="1"/>
</dbReference>
<dbReference type="SUPFAM" id="SSF52972">
    <property type="entry name" value="ITPase-like"/>
    <property type="match status" value="1"/>
</dbReference>
<feature type="chain" id="PRO_1000060950" description="Nucleoside triphosphate pyrophosphatase">
    <location>
        <begin position="1"/>
        <end position="216"/>
    </location>
</feature>
<feature type="active site" description="Proton acceptor" evidence="1">
    <location>
        <position position="82"/>
    </location>
</feature>
<proteinExistence type="inferred from homology"/>
<name>NTPP_MYCUA</name>